<proteinExistence type="evidence at protein level"/>
<evidence type="ECO:0000250" key="1"/>
<evidence type="ECO:0000250" key="2">
    <source>
        <dbReference type="UniProtKB" id="Q94A52"/>
    </source>
</evidence>
<evidence type="ECO:0000255" key="3">
    <source>
        <dbReference type="PROSITE-ProRule" id="PRU00541"/>
    </source>
</evidence>
<evidence type="ECO:0000255" key="4">
    <source>
        <dbReference type="PROSITE-ProRule" id="PRU00542"/>
    </source>
</evidence>
<evidence type="ECO:0000305" key="5"/>
<evidence type="ECO:0007744" key="6">
    <source>
    </source>
</evidence>
<evidence type="ECO:0007744" key="7">
    <source>
    </source>
</evidence>
<reference key="1">
    <citation type="journal article" date="1999" name="Nucleic Acids Res.">
        <title>The DEAD box RNA helicase family in Arabidopsis thaliana.</title>
        <authorList>
            <person name="Aubourg S."/>
            <person name="Kreis M."/>
            <person name="Lecharny A."/>
        </authorList>
    </citation>
    <scope>NUCLEOTIDE SEQUENCE [MRNA]</scope>
    <source>
        <strain>cv. Columbia</strain>
    </source>
</reference>
<reference key="2">
    <citation type="journal article" date="2000" name="Nature">
        <title>Sequence and analysis of chromosome 1 of the plant Arabidopsis thaliana.</title>
        <authorList>
            <person name="Theologis A."/>
            <person name="Ecker J.R."/>
            <person name="Palm C.J."/>
            <person name="Federspiel N.A."/>
            <person name="Kaul S."/>
            <person name="White O."/>
            <person name="Alonso J."/>
            <person name="Altafi H."/>
            <person name="Araujo R."/>
            <person name="Bowman C.L."/>
            <person name="Brooks S.Y."/>
            <person name="Buehler E."/>
            <person name="Chan A."/>
            <person name="Chao Q."/>
            <person name="Chen H."/>
            <person name="Cheuk R.F."/>
            <person name="Chin C.W."/>
            <person name="Chung M.K."/>
            <person name="Conn L."/>
            <person name="Conway A.B."/>
            <person name="Conway A.R."/>
            <person name="Creasy T.H."/>
            <person name="Dewar K."/>
            <person name="Dunn P."/>
            <person name="Etgu P."/>
            <person name="Feldblyum T.V."/>
            <person name="Feng J.-D."/>
            <person name="Fong B."/>
            <person name="Fujii C.Y."/>
            <person name="Gill J.E."/>
            <person name="Goldsmith A.D."/>
            <person name="Haas B."/>
            <person name="Hansen N.F."/>
            <person name="Hughes B."/>
            <person name="Huizar L."/>
            <person name="Hunter J.L."/>
            <person name="Jenkins J."/>
            <person name="Johnson-Hopson C."/>
            <person name="Khan S."/>
            <person name="Khaykin E."/>
            <person name="Kim C.J."/>
            <person name="Koo H.L."/>
            <person name="Kremenetskaia I."/>
            <person name="Kurtz D.B."/>
            <person name="Kwan A."/>
            <person name="Lam B."/>
            <person name="Langin-Hooper S."/>
            <person name="Lee A."/>
            <person name="Lee J.M."/>
            <person name="Lenz C.A."/>
            <person name="Li J.H."/>
            <person name="Li Y.-P."/>
            <person name="Lin X."/>
            <person name="Liu S.X."/>
            <person name="Liu Z.A."/>
            <person name="Luros J.S."/>
            <person name="Maiti R."/>
            <person name="Marziali A."/>
            <person name="Militscher J."/>
            <person name="Miranda M."/>
            <person name="Nguyen M."/>
            <person name="Nierman W.C."/>
            <person name="Osborne B.I."/>
            <person name="Pai G."/>
            <person name="Peterson J."/>
            <person name="Pham P.K."/>
            <person name="Rizzo M."/>
            <person name="Rooney T."/>
            <person name="Rowley D."/>
            <person name="Sakano H."/>
            <person name="Salzberg S.L."/>
            <person name="Schwartz J.R."/>
            <person name="Shinn P."/>
            <person name="Southwick A.M."/>
            <person name="Sun H."/>
            <person name="Tallon L.J."/>
            <person name="Tambunga G."/>
            <person name="Toriumi M.J."/>
            <person name="Town C.D."/>
            <person name="Utterback T."/>
            <person name="Van Aken S."/>
            <person name="Vaysberg M."/>
            <person name="Vysotskaia V.S."/>
            <person name="Walker M."/>
            <person name="Wu D."/>
            <person name="Yu G."/>
            <person name="Fraser C.M."/>
            <person name="Venter J.C."/>
            <person name="Davis R.W."/>
        </authorList>
    </citation>
    <scope>NUCLEOTIDE SEQUENCE [LARGE SCALE GENOMIC DNA]</scope>
    <source>
        <strain>cv. Columbia</strain>
    </source>
</reference>
<reference key="3">
    <citation type="journal article" date="2017" name="Plant J.">
        <title>Araport11: a complete reannotation of the Arabidopsis thaliana reference genome.</title>
        <authorList>
            <person name="Cheng C.Y."/>
            <person name="Krishnakumar V."/>
            <person name="Chan A.P."/>
            <person name="Thibaud-Nissen F."/>
            <person name="Schobel S."/>
            <person name="Town C.D."/>
        </authorList>
    </citation>
    <scope>GENOME REANNOTATION</scope>
    <source>
        <strain>cv. Columbia</strain>
    </source>
</reference>
<reference key="4">
    <citation type="journal article" date="2003" name="Science">
        <title>Empirical analysis of transcriptional activity in the Arabidopsis genome.</title>
        <authorList>
            <person name="Yamada K."/>
            <person name="Lim J."/>
            <person name="Dale J.M."/>
            <person name="Chen H."/>
            <person name="Shinn P."/>
            <person name="Palm C.J."/>
            <person name="Southwick A.M."/>
            <person name="Wu H.C."/>
            <person name="Kim C.J."/>
            <person name="Nguyen M."/>
            <person name="Pham P.K."/>
            <person name="Cheuk R.F."/>
            <person name="Karlin-Newmann G."/>
            <person name="Liu S.X."/>
            <person name="Lam B."/>
            <person name="Sakano H."/>
            <person name="Wu T."/>
            <person name="Yu G."/>
            <person name="Miranda M."/>
            <person name="Quach H.L."/>
            <person name="Tripp M."/>
            <person name="Chang C.H."/>
            <person name="Lee J.M."/>
            <person name="Toriumi M.J."/>
            <person name="Chan M.M."/>
            <person name="Tang C.C."/>
            <person name="Onodera C.S."/>
            <person name="Deng J.M."/>
            <person name="Akiyama K."/>
            <person name="Ansari Y."/>
            <person name="Arakawa T."/>
            <person name="Banh J."/>
            <person name="Banno F."/>
            <person name="Bowser L."/>
            <person name="Brooks S.Y."/>
            <person name="Carninci P."/>
            <person name="Chao Q."/>
            <person name="Choy N."/>
            <person name="Enju A."/>
            <person name="Goldsmith A.D."/>
            <person name="Gurjal M."/>
            <person name="Hansen N.F."/>
            <person name="Hayashizaki Y."/>
            <person name="Johnson-Hopson C."/>
            <person name="Hsuan V.W."/>
            <person name="Iida K."/>
            <person name="Karnes M."/>
            <person name="Khan S."/>
            <person name="Koesema E."/>
            <person name="Ishida J."/>
            <person name="Jiang P.X."/>
            <person name="Jones T."/>
            <person name="Kawai J."/>
            <person name="Kamiya A."/>
            <person name="Meyers C."/>
            <person name="Nakajima M."/>
            <person name="Narusaka M."/>
            <person name="Seki M."/>
            <person name="Sakurai T."/>
            <person name="Satou M."/>
            <person name="Tamse R."/>
            <person name="Vaysberg M."/>
            <person name="Wallender E.K."/>
            <person name="Wong C."/>
            <person name="Yamamura Y."/>
            <person name="Yuan S."/>
            <person name="Shinozaki K."/>
            <person name="Davis R.W."/>
            <person name="Theologis A."/>
            <person name="Ecker J.R."/>
        </authorList>
    </citation>
    <scope>NUCLEOTIDE SEQUENCE [LARGE SCALE MRNA]</scope>
    <source>
        <strain>cv. Columbia</strain>
    </source>
</reference>
<reference key="5">
    <citation type="submission" date="2002-03" db="EMBL/GenBank/DDBJ databases">
        <title>Full-length cDNA from Arabidopsis thaliana.</title>
        <authorList>
            <person name="Brover V.V."/>
            <person name="Troukhan M.E."/>
            <person name="Alexandrov N.A."/>
            <person name="Lu Y.-P."/>
            <person name="Flavell R.B."/>
            <person name="Feldmann K.A."/>
        </authorList>
    </citation>
    <scope>NUCLEOTIDE SEQUENCE [LARGE SCALE MRNA]</scope>
</reference>
<reference key="6">
    <citation type="journal article" date="2004" name="Plant Biotechnol. J.">
        <title>DEAD-box RNA helicases in Arabidopsis thaliana: establishing a link between quantitative expression, gene structure and evolution of a family of genes.</title>
        <authorList>
            <person name="Mingam A."/>
            <person name="Toffano-Nioche C."/>
            <person name="Brunaud V."/>
            <person name="Boudet N."/>
            <person name="Kreis M."/>
            <person name="Lecharny A."/>
        </authorList>
    </citation>
    <scope>GENE FAMILY</scope>
    <scope>NOMENCLATURE</scope>
</reference>
<reference key="7">
    <citation type="journal article" date="2008" name="J. Proteome Res.">
        <title>Site-specific phosphorylation profiling of Arabidopsis proteins by mass spectrometry and peptide chip analysis.</title>
        <authorList>
            <person name="de la Fuente van Bentem S."/>
            <person name="Anrather D."/>
            <person name="Dohnal I."/>
            <person name="Roitinger E."/>
            <person name="Csaszar E."/>
            <person name="Joore J."/>
            <person name="Buijnink J."/>
            <person name="Carreri A."/>
            <person name="Forzani C."/>
            <person name="Lorkovic Z.J."/>
            <person name="Barta A."/>
            <person name="Lecourieux D."/>
            <person name="Verhounig A."/>
            <person name="Jonak C."/>
            <person name="Hirt H."/>
        </authorList>
    </citation>
    <scope>PHOSPHORYLATION [LARGE SCALE ANALYSIS] AT THR-147</scope>
    <scope>IDENTIFICATION BY MASS SPECTROMETRY [LARGE SCALE ANALYSIS]</scope>
    <source>
        <tissue>Root</tissue>
    </source>
</reference>
<reference key="8">
    <citation type="journal article" date="2012" name="Mol. Cell. Proteomics">
        <title>Comparative large-scale characterisation of plant vs. mammal proteins reveals similar and idiosyncratic N-alpha acetylation features.</title>
        <authorList>
            <person name="Bienvenut W.V."/>
            <person name="Sumpton D."/>
            <person name="Martinez A."/>
            <person name="Lilla S."/>
            <person name="Espagne C."/>
            <person name="Meinnel T."/>
            <person name="Giglione C."/>
        </authorList>
    </citation>
    <scope>ACETYLATION [LARGE SCALE ANALYSIS] AT ALA-2</scope>
    <scope>CLEAVAGE OF INITIATOR METHIONINE [LARGE SCALE ANALYSIS]</scope>
    <scope>IDENTIFICATION BY MASS SPECTROMETRY [LARGE SCALE ANALYSIS]</scope>
</reference>
<reference key="9">
    <citation type="journal article" date="2013" name="PLoS ONE">
        <title>Genome-wide comparative in silico analysis of the RNA helicase gene family in Zea mays and Glycine max: a comparison with Arabidopsis and Oryza sativa.</title>
        <authorList>
            <person name="Xu R."/>
            <person name="Zhang S."/>
            <person name="Huang J."/>
            <person name="Zheng C."/>
        </authorList>
    </citation>
    <scope>GENE FAMILY</scope>
</reference>
<sequence>MAGMASDGTQYDPRQFDTKMNAILGEEGEETFYTNYDEVCDSFDAMELQPDLLRGIYAYGFEKPSAIQQRGIIPFCKGLDVIQQAQSGTGKTATFCSGVLQQLDISLVQCQALVLAPTRELAQQIEKVMRALGDYLGVKAQACVGGTSVREDQRVLQSGVHVVVGTPGRVFDLLRRQSLRADAIKMFVLDEADEMLSRGFKDQIYDIFQLLPSKVQVGVFSATMPPEALEITRKFMNKPVRILVKRDELTLEGIKQFYVNVDKEEWKLETLCDLYETLAITQSVIFVNTRRKVDWLTDKMRSRDHTVSATHGDMDQNTRDIIMREFRSGSSRVLITTDLLARGIDVQQVSLVINFDLPTQPENYLHRIGRSGRFGRKGVAINFMTSEDERMMADIQRFYNVVVEELPSNVADLL</sequence>
<dbReference type="EC" id="3.6.4.13"/>
<dbReference type="EMBL" id="AJ010472">
    <property type="protein sequence ID" value="CAA09211.1"/>
    <property type="status" value="ALT_INIT"/>
    <property type="molecule type" value="mRNA"/>
</dbReference>
<dbReference type="EMBL" id="AC010926">
    <property type="protein sequence ID" value="AAG51861.1"/>
    <property type="molecule type" value="Genomic_DNA"/>
</dbReference>
<dbReference type="EMBL" id="CP002684">
    <property type="protein sequence ID" value="AEE35365.1"/>
    <property type="molecule type" value="Genomic_DNA"/>
</dbReference>
<dbReference type="EMBL" id="AY060592">
    <property type="protein sequence ID" value="AAL31217.1"/>
    <property type="molecule type" value="mRNA"/>
</dbReference>
<dbReference type="EMBL" id="AY142066">
    <property type="protein sequence ID" value="AAM98330.1"/>
    <property type="molecule type" value="mRNA"/>
</dbReference>
<dbReference type="EMBL" id="AY088176">
    <property type="protein sequence ID" value="AAM65719.1"/>
    <property type="molecule type" value="mRNA"/>
</dbReference>
<dbReference type="PIR" id="B96752">
    <property type="entry name" value="B96752"/>
</dbReference>
<dbReference type="PIR" id="T51347">
    <property type="entry name" value="T51347"/>
</dbReference>
<dbReference type="RefSeq" id="NP_177417.1">
    <property type="nucleotide sequence ID" value="NM_105932.3"/>
</dbReference>
<dbReference type="SMR" id="Q9CAI7"/>
<dbReference type="BioGRID" id="28824">
    <property type="interactions" value="5"/>
</dbReference>
<dbReference type="FunCoup" id="Q9CAI7">
    <property type="interactions" value="3472"/>
</dbReference>
<dbReference type="IntAct" id="Q9CAI7">
    <property type="interactions" value="1"/>
</dbReference>
<dbReference type="STRING" id="3702.Q9CAI7"/>
<dbReference type="iPTMnet" id="Q9CAI7"/>
<dbReference type="PaxDb" id="3702-AT1G72730.1"/>
<dbReference type="ProteomicsDB" id="228873"/>
<dbReference type="EnsemblPlants" id="AT1G72730.1">
    <property type="protein sequence ID" value="AT1G72730.1"/>
    <property type="gene ID" value="AT1G72730"/>
</dbReference>
<dbReference type="GeneID" id="843605"/>
<dbReference type="Gramene" id="AT1G72730.1">
    <property type="protein sequence ID" value="AT1G72730.1"/>
    <property type="gene ID" value="AT1G72730"/>
</dbReference>
<dbReference type="KEGG" id="ath:AT1G72730"/>
<dbReference type="Araport" id="AT1G72730"/>
<dbReference type="TAIR" id="AT1G72730"/>
<dbReference type="eggNOG" id="KOG0327">
    <property type="taxonomic scope" value="Eukaryota"/>
</dbReference>
<dbReference type="HOGENOM" id="CLU_003041_1_0_1"/>
<dbReference type="InParanoid" id="Q9CAI7"/>
<dbReference type="OMA" id="NTREQCD"/>
<dbReference type="OrthoDB" id="1035469at2759"/>
<dbReference type="PhylomeDB" id="Q9CAI7"/>
<dbReference type="CD-CODE" id="4299E36E">
    <property type="entry name" value="Nucleolus"/>
</dbReference>
<dbReference type="PRO" id="PR:Q9CAI7"/>
<dbReference type="Proteomes" id="UP000006548">
    <property type="component" value="Chromosome 1"/>
</dbReference>
<dbReference type="ExpressionAtlas" id="Q9CAI7">
    <property type="expression patterns" value="baseline and differential"/>
</dbReference>
<dbReference type="GO" id="GO:0005739">
    <property type="term" value="C:mitochondrion"/>
    <property type="evidence" value="ECO:0007005"/>
    <property type="project" value="TAIR"/>
</dbReference>
<dbReference type="GO" id="GO:0009505">
    <property type="term" value="C:plant-type cell wall"/>
    <property type="evidence" value="ECO:0007005"/>
    <property type="project" value="TAIR"/>
</dbReference>
<dbReference type="GO" id="GO:0000325">
    <property type="term" value="C:plant-type vacuole"/>
    <property type="evidence" value="ECO:0007005"/>
    <property type="project" value="TAIR"/>
</dbReference>
<dbReference type="GO" id="GO:0005524">
    <property type="term" value="F:ATP binding"/>
    <property type="evidence" value="ECO:0007669"/>
    <property type="project" value="UniProtKB-KW"/>
</dbReference>
<dbReference type="GO" id="GO:0016887">
    <property type="term" value="F:ATP hydrolysis activity"/>
    <property type="evidence" value="ECO:0007669"/>
    <property type="project" value="RHEA"/>
</dbReference>
<dbReference type="GO" id="GO:0003729">
    <property type="term" value="F:mRNA binding"/>
    <property type="evidence" value="ECO:0000314"/>
    <property type="project" value="TAIR"/>
</dbReference>
<dbReference type="GO" id="GO:0003724">
    <property type="term" value="F:RNA helicase activity"/>
    <property type="evidence" value="ECO:0007669"/>
    <property type="project" value="UniProtKB-EC"/>
</dbReference>
<dbReference type="GO" id="GO:0003743">
    <property type="term" value="F:translation initiation factor activity"/>
    <property type="evidence" value="ECO:0007669"/>
    <property type="project" value="UniProtKB-KW"/>
</dbReference>
<dbReference type="CDD" id="cd17939">
    <property type="entry name" value="DEADc_EIF4A"/>
    <property type="match status" value="1"/>
</dbReference>
<dbReference type="CDD" id="cd18787">
    <property type="entry name" value="SF2_C_DEAD"/>
    <property type="match status" value="1"/>
</dbReference>
<dbReference type="FunFam" id="3.40.50.300:FF:000089">
    <property type="entry name" value="Eukaryotic initiation factor 4A-II"/>
    <property type="match status" value="1"/>
</dbReference>
<dbReference type="FunFam" id="3.40.50.300:FF:000031">
    <property type="entry name" value="Eukaryotic initiation factor 4A-III"/>
    <property type="match status" value="1"/>
</dbReference>
<dbReference type="Gene3D" id="3.40.50.300">
    <property type="entry name" value="P-loop containing nucleotide triphosphate hydrolases"/>
    <property type="match status" value="2"/>
</dbReference>
<dbReference type="InterPro" id="IPR011545">
    <property type="entry name" value="DEAD/DEAH_box_helicase_dom"/>
</dbReference>
<dbReference type="InterPro" id="IPR014001">
    <property type="entry name" value="Helicase_ATP-bd"/>
</dbReference>
<dbReference type="InterPro" id="IPR001650">
    <property type="entry name" value="Helicase_C-like"/>
</dbReference>
<dbReference type="InterPro" id="IPR027417">
    <property type="entry name" value="P-loop_NTPase"/>
</dbReference>
<dbReference type="InterPro" id="IPR000629">
    <property type="entry name" value="RNA-helicase_DEAD-box_CS"/>
</dbReference>
<dbReference type="InterPro" id="IPR014014">
    <property type="entry name" value="RNA_helicase_DEAD_Q_motif"/>
</dbReference>
<dbReference type="PANTHER" id="PTHR47958">
    <property type="entry name" value="ATP-DEPENDENT RNA HELICASE DBP3"/>
    <property type="match status" value="1"/>
</dbReference>
<dbReference type="Pfam" id="PF00270">
    <property type="entry name" value="DEAD"/>
    <property type="match status" value="1"/>
</dbReference>
<dbReference type="Pfam" id="PF00271">
    <property type="entry name" value="Helicase_C"/>
    <property type="match status" value="1"/>
</dbReference>
<dbReference type="SMART" id="SM00487">
    <property type="entry name" value="DEXDc"/>
    <property type="match status" value="1"/>
</dbReference>
<dbReference type="SMART" id="SM00490">
    <property type="entry name" value="HELICc"/>
    <property type="match status" value="1"/>
</dbReference>
<dbReference type="SUPFAM" id="SSF52540">
    <property type="entry name" value="P-loop containing nucleoside triphosphate hydrolases"/>
    <property type="match status" value="1"/>
</dbReference>
<dbReference type="PROSITE" id="PS00039">
    <property type="entry name" value="DEAD_ATP_HELICASE"/>
    <property type="match status" value="1"/>
</dbReference>
<dbReference type="PROSITE" id="PS51192">
    <property type="entry name" value="HELICASE_ATP_BIND_1"/>
    <property type="match status" value="1"/>
</dbReference>
<dbReference type="PROSITE" id="PS51194">
    <property type="entry name" value="HELICASE_CTER"/>
    <property type="match status" value="1"/>
</dbReference>
<dbReference type="PROSITE" id="PS51195">
    <property type="entry name" value="Q_MOTIF"/>
    <property type="match status" value="1"/>
</dbReference>
<name>IF4A3_ARATH</name>
<accession>Q9CAI7</accession>
<accession>Q9ZS01</accession>
<gene>
    <name type="primary">TIF4A-3</name>
    <name type="synonym">RH23</name>
    <name type="ordered locus">At1g72730</name>
    <name type="ORF">F28P22.8</name>
</gene>
<comment type="function">
    <text evidence="1">ATP-dependent RNA helicase which is a subunit of the eIF4F complex involved in cap recognition and is required for mRNA binding to ribosome. In the current model of translation initiation, eIF4A unwinds RNA secondary structures in the 5'-UTR of mRNAs which is necessary to allow efficient binding of the small ribosomal subunit, and subsequent scanning for the initiator codon (By similarity).</text>
</comment>
<comment type="catalytic activity">
    <reaction>
        <text>ATP + H2O = ADP + phosphate + H(+)</text>
        <dbReference type="Rhea" id="RHEA:13065"/>
        <dbReference type="ChEBI" id="CHEBI:15377"/>
        <dbReference type="ChEBI" id="CHEBI:15378"/>
        <dbReference type="ChEBI" id="CHEBI:30616"/>
        <dbReference type="ChEBI" id="CHEBI:43474"/>
        <dbReference type="ChEBI" id="CHEBI:456216"/>
        <dbReference type="EC" id="3.6.4.13"/>
    </reaction>
</comment>
<comment type="subunit">
    <text evidence="1">eIF4F is a multi-subunit complex, the composition of which varies with external and internal environmental conditions. It is composed of at least EIF4A, EIF4E and EIF4G (By similarity).</text>
</comment>
<comment type="subcellular location">
    <subcellularLocation>
        <location evidence="1">Cytoplasm</location>
    </subcellularLocation>
</comment>
<comment type="domain">
    <text>The Q motif is unique to and characteristic of the DEAD box family of RNA helicases and controls ATP binding and hydrolysis.</text>
</comment>
<comment type="similarity">
    <text evidence="5">Belongs to the DEAD box helicase family. eIF4A subfamily.</text>
</comment>
<comment type="sequence caution" evidence="5">
    <conflict type="erroneous initiation">
        <sequence resource="EMBL-CDS" id="CAA09211"/>
    </conflict>
</comment>
<organism>
    <name type="scientific">Arabidopsis thaliana</name>
    <name type="common">Mouse-ear cress</name>
    <dbReference type="NCBI Taxonomy" id="3702"/>
    <lineage>
        <taxon>Eukaryota</taxon>
        <taxon>Viridiplantae</taxon>
        <taxon>Streptophyta</taxon>
        <taxon>Embryophyta</taxon>
        <taxon>Tracheophyta</taxon>
        <taxon>Spermatophyta</taxon>
        <taxon>Magnoliopsida</taxon>
        <taxon>eudicotyledons</taxon>
        <taxon>Gunneridae</taxon>
        <taxon>Pentapetalae</taxon>
        <taxon>rosids</taxon>
        <taxon>malvids</taxon>
        <taxon>Brassicales</taxon>
        <taxon>Brassicaceae</taxon>
        <taxon>Camelineae</taxon>
        <taxon>Arabidopsis</taxon>
    </lineage>
</organism>
<keyword id="KW-0007">Acetylation</keyword>
<keyword id="KW-0067">ATP-binding</keyword>
<keyword id="KW-0963">Cytoplasm</keyword>
<keyword id="KW-0347">Helicase</keyword>
<keyword id="KW-0378">Hydrolase</keyword>
<keyword id="KW-0396">Initiation factor</keyword>
<keyword id="KW-0547">Nucleotide-binding</keyword>
<keyword id="KW-0597">Phosphoprotein</keyword>
<keyword id="KW-0648">Protein biosynthesis</keyword>
<keyword id="KW-1185">Reference proteome</keyword>
<keyword id="KW-0694">RNA-binding</keyword>
<protein>
    <recommendedName>
        <fullName>Eukaryotic initiation factor 4A-3</fullName>
        <shortName>eIF-4A-3</shortName>
        <ecNumber>3.6.4.13</ecNumber>
    </recommendedName>
    <alternativeName>
        <fullName>ATP-dependent RNA helicase eIF4A-3</fullName>
    </alternativeName>
    <alternativeName>
        <fullName>DEAD-box ATP-dependent RNA helicase 23</fullName>
    </alternativeName>
</protein>
<feature type="initiator methionine" description="Removed" evidence="7">
    <location>
        <position position="1"/>
    </location>
</feature>
<feature type="chain" id="PRO_0000239198" description="Eukaryotic initiation factor 4A-3">
    <location>
        <begin position="2"/>
        <end position="414"/>
    </location>
</feature>
<feature type="domain" description="Helicase ATP-binding" evidence="3">
    <location>
        <begin position="72"/>
        <end position="242"/>
    </location>
</feature>
<feature type="domain" description="Helicase C-terminal" evidence="4">
    <location>
        <begin position="253"/>
        <end position="414"/>
    </location>
</feature>
<feature type="short sequence motif" description="Q motif">
    <location>
        <begin position="41"/>
        <end position="69"/>
    </location>
</feature>
<feature type="short sequence motif" description="DEAD box">
    <location>
        <begin position="190"/>
        <end position="193"/>
    </location>
</feature>
<feature type="binding site" evidence="3">
    <location>
        <begin position="85"/>
        <end position="92"/>
    </location>
    <ligand>
        <name>ATP</name>
        <dbReference type="ChEBI" id="CHEBI:30616"/>
    </ligand>
</feature>
<feature type="modified residue" description="N-acetylalanine" evidence="7">
    <location>
        <position position="2"/>
    </location>
</feature>
<feature type="modified residue" description="Phosphoserine" evidence="2">
    <location>
        <position position="106"/>
    </location>
</feature>
<feature type="modified residue" description="Phosphothreonine" evidence="6">
    <location>
        <position position="147"/>
    </location>
</feature>
<feature type="sequence conflict" description="In Ref. 1; CAA09211." evidence="5" ref="1">
    <original>S</original>
    <variation>T</variation>
    <location>
        <position position="42"/>
    </location>
</feature>